<gene>
    <name type="primary">gdpmt</name>
</gene>
<reference key="1">
    <citation type="submission" date="2010-02" db="EMBL/GenBank/DDBJ databases">
        <authorList>
            <person name="Oikawa H."/>
            <person name="Tsuda M."/>
            <person name="Migita A."/>
        </authorList>
    </citation>
    <scope>NUCLEOTIDE SEQUENCE [GENOMIC DNA]</scope>
    <source>
        <strain>ATCC 31180 / DSM 41442 / NRRL 3382 / X-537</strain>
    </source>
</reference>
<reference key="2">
    <citation type="journal article" date="2008" name="Proc. Natl. Acad. Sci. U.S.A.">
        <title>Identification and functional analysis of genes controlling biosynthesis of 2-methylisoborneol.</title>
        <authorList>
            <person name="Komatsu M."/>
            <person name="Tsuda M."/>
            <person name="Omura S."/>
            <person name="Oikawa H."/>
            <person name="Ikeda H."/>
        </authorList>
    </citation>
    <scope>FUNCTION</scope>
    <scope>CATALYTIC ACTIVITY</scope>
    <scope>PATHWAY</scope>
    <source>
        <strain>ATCC 31180 / DSM 41442 / NRRL 3382 / X-537</strain>
    </source>
</reference>
<keyword id="KW-0002">3D-structure</keyword>
<keyword id="KW-0460">Magnesium</keyword>
<keyword id="KW-0489">Methyltransferase</keyword>
<keyword id="KW-0614">Plasmid</keyword>
<keyword id="KW-0949">S-adenosyl-L-methionine</keyword>
<keyword id="KW-0808">Transferase</keyword>
<proteinExistence type="evidence at protein level"/>
<geneLocation type="plasmid">
    <name>pKSL</name>
</geneLocation>
<name>GPPMT_STRLS</name>
<dbReference type="EC" id="2.1.1.255"/>
<dbReference type="EMBL" id="AB547324">
    <property type="protein sequence ID" value="BAI77524.1"/>
    <property type="molecule type" value="Genomic_DNA"/>
</dbReference>
<dbReference type="RefSeq" id="WP_032492608.1">
    <property type="nucleotide sequence ID" value="NZ_SZNQ01000001.1"/>
</dbReference>
<dbReference type="PDB" id="4F84">
    <property type="method" value="X-ray"/>
    <property type="resolution" value="2.20 A"/>
    <property type="chains" value="A=1-300"/>
</dbReference>
<dbReference type="PDB" id="4F85">
    <property type="method" value="X-ray"/>
    <property type="resolution" value="2.20 A"/>
    <property type="chains" value="A=1-300"/>
</dbReference>
<dbReference type="PDB" id="4F86">
    <property type="method" value="X-ray"/>
    <property type="resolution" value="3.00 A"/>
    <property type="chains" value="A/B/C/D/E/F/G/H/I/J/K/L=1-300"/>
</dbReference>
<dbReference type="PDBsum" id="4F84"/>
<dbReference type="PDBsum" id="4F85"/>
<dbReference type="PDBsum" id="4F86"/>
<dbReference type="SMR" id="D3KYU3"/>
<dbReference type="KEGG" id="ag:BAI77524"/>
<dbReference type="OrthoDB" id="3279989at2"/>
<dbReference type="BRENDA" id="2.1.1.255">
    <property type="organism ID" value="12665"/>
</dbReference>
<dbReference type="EvolutionaryTrace" id="D3KYU3"/>
<dbReference type="GO" id="GO:0008169">
    <property type="term" value="F:C-methyltransferase activity"/>
    <property type="evidence" value="ECO:0000314"/>
    <property type="project" value="UniProtKB"/>
</dbReference>
<dbReference type="GO" id="GO:0000287">
    <property type="term" value="F:magnesium ion binding"/>
    <property type="evidence" value="ECO:0007669"/>
    <property type="project" value="InterPro"/>
</dbReference>
<dbReference type="GO" id="GO:1904047">
    <property type="term" value="F:S-adenosyl-L-methionine binding"/>
    <property type="evidence" value="ECO:0007669"/>
    <property type="project" value="InterPro"/>
</dbReference>
<dbReference type="GO" id="GO:0008757">
    <property type="term" value="F:S-adenosylmethionine-dependent methyltransferase activity"/>
    <property type="evidence" value="ECO:0000314"/>
    <property type="project" value="UniProtKB"/>
</dbReference>
<dbReference type="GO" id="GO:0032259">
    <property type="term" value="P:methylation"/>
    <property type="evidence" value="ECO:0007669"/>
    <property type="project" value="UniProtKB-KW"/>
</dbReference>
<dbReference type="GO" id="GO:0042214">
    <property type="term" value="P:terpene metabolic process"/>
    <property type="evidence" value="ECO:0000314"/>
    <property type="project" value="UniProtKB"/>
</dbReference>
<dbReference type="CDD" id="cd02440">
    <property type="entry name" value="AdoMet_MTases"/>
    <property type="match status" value="1"/>
</dbReference>
<dbReference type="FunFam" id="3.40.50.150:FF:000183">
    <property type="entry name" value="Geranyl diphosphate 2-C-methyltransferase"/>
    <property type="match status" value="1"/>
</dbReference>
<dbReference type="Gene3D" id="3.40.50.150">
    <property type="entry name" value="Vaccinia Virus protein VP39"/>
    <property type="match status" value="1"/>
</dbReference>
<dbReference type="InterPro" id="IPR050447">
    <property type="entry name" value="Erg6_SMT_methyltransf"/>
</dbReference>
<dbReference type="InterPro" id="IPR049645">
    <property type="entry name" value="GPPMT_Stmyces"/>
</dbReference>
<dbReference type="InterPro" id="IPR029063">
    <property type="entry name" value="SAM-dependent_MTases_sf"/>
</dbReference>
<dbReference type="NCBIfam" id="NF041943">
    <property type="entry name" value="GPPMT_Stmyces"/>
    <property type="match status" value="1"/>
</dbReference>
<dbReference type="PANTHER" id="PTHR44068:SF11">
    <property type="entry name" value="GERANYL DIPHOSPHATE 2-C-METHYLTRANSFERASE"/>
    <property type="match status" value="1"/>
</dbReference>
<dbReference type="PANTHER" id="PTHR44068">
    <property type="entry name" value="ZGC:194242"/>
    <property type="match status" value="1"/>
</dbReference>
<dbReference type="Pfam" id="PF02353">
    <property type="entry name" value="CMAS"/>
    <property type="match status" value="1"/>
</dbReference>
<dbReference type="SUPFAM" id="SSF53335">
    <property type="entry name" value="S-adenosyl-L-methionine-dependent methyltransferases"/>
    <property type="match status" value="1"/>
</dbReference>
<comment type="function">
    <text evidence="2">Catalyzes the SAM-dependent methylation of geranyl diphosphate (GPP) to yield (E)-2-methylgeranyl diphosphate (2-MeGPP).</text>
</comment>
<comment type="catalytic activity">
    <reaction evidence="2">
        <text>(2E)-geranyl diphosphate + S-adenosyl-L-methionine = (E)-2-methylgeranyl diphosphate + S-adenosyl-L-homocysteine + H(+)</text>
        <dbReference type="Rhea" id="RHEA:32519"/>
        <dbReference type="ChEBI" id="CHEBI:15378"/>
        <dbReference type="ChEBI" id="CHEBI:57856"/>
        <dbReference type="ChEBI" id="CHEBI:58057"/>
        <dbReference type="ChEBI" id="CHEBI:59789"/>
        <dbReference type="ChEBI" id="CHEBI:61984"/>
        <dbReference type="EC" id="2.1.1.255"/>
    </reaction>
</comment>
<comment type="cofactor">
    <cofactor evidence="3">
        <name>Mg(2+)</name>
        <dbReference type="ChEBI" id="CHEBI:18420"/>
    </cofactor>
</comment>
<comment type="similarity">
    <text evidence="3">Belongs to the geranyl diphosphate 2-C-methyltransferase family.</text>
</comment>
<evidence type="ECO:0000256" key="1">
    <source>
        <dbReference type="SAM" id="MobiDB-lite"/>
    </source>
</evidence>
<evidence type="ECO:0000269" key="2">
    <source>
    </source>
</evidence>
<evidence type="ECO:0000305" key="3"/>
<evidence type="ECO:0007829" key="4">
    <source>
        <dbReference type="PDB" id="4F84"/>
    </source>
</evidence>
<evidence type="ECO:0007829" key="5">
    <source>
        <dbReference type="PDB" id="4F86"/>
    </source>
</evidence>
<protein>
    <recommendedName>
        <fullName>Geranyl diphosphate 2-C-methyltransferase</fullName>
        <shortName>GPP methyltransferase</shortName>
        <ecNumber>2.1.1.255</ecNumber>
    </recommendedName>
</protein>
<accession>D3KYU3</accession>
<sequence length="300" mass="32881">MAAASAPVPGPGGASSTARGRIPAPATPYQEDIARYWNNEARPVNLRLGDVDGLYHHHYGIGAVDHAALGDPGDGGYEARLIAELHRLESAQAEFLLDHLGPVGPGDTLVDAGCGRGGSMVMAHQRFGCKVEGVTLSAAQAEFGNRRARELGIDDHVRSRVCNMLDTPFEKGTVAASWNNESSMYVDLHDVFAEHSRFLRVGGRYVTVTGCWNPRYGQPSKWVSQINAHFECNIHSRREYLRAMADNRLVPQTVVDLTPETLPYWELRATSSLVTGIEEAFIESYRDGSFQYVLIAADRV</sequence>
<organism>
    <name type="scientific">Streptomyces lasalocidi</name>
    <name type="common">Streptomyces lasaliensis</name>
    <dbReference type="NCBI Taxonomy" id="324833"/>
    <lineage>
        <taxon>Bacteria</taxon>
        <taxon>Bacillati</taxon>
        <taxon>Actinomycetota</taxon>
        <taxon>Actinomycetes</taxon>
        <taxon>Kitasatosporales</taxon>
        <taxon>Streptomycetaceae</taxon>
        <taxon>Streptomyces</taxon>
    </lineage>
</organism>
<feature type="chain" id="PRO_0000403380" description="Geranyl diphosphate 2-C-methyltransferase">
    <location>
        <begin position="1"/>
        <end position="300"/>
    </location>
</feature>
<feature type="region of interest" description="Disordered" evidence="1">
    <location>
        <begin position="1"/>
        <end position="24"/>
    </location>
</feature>
<feature type="helix" evidence="5">
    <location>
        <begin position="28"/>
        <end position="37"/>
    </location>
</feature>
<feature type="helix" evidence="5">
    <location>
        <begin position="43"/>
        <end position="50"/>
    </location>
</feature>
<feature type="helix" evidence="4">
    <location>
        <begin position="66"/>
        <end position="69"/>
    </location>
</feature>
<feature type="strand" evidence="5">
    <location>
        <begin position="72"/>
        <end position="74"/>
    </location>
</feature>
<feature type="helix" evidence="4">
    <location>
        <begin position="77"/>
        <end position="97"/>
    </location>
</feature>
<feature type="strand" evidence="4">
    <location>
        <begin position="108"/>
        <end position="113"/>
    </location>
</feature>
<feature type="helix" evidence="4">
    <location>
        <begin position="118"/>
        <end position="127"/>
    </location>
</feature>
<feature type="strand" evidence="4">
    <location>
        <begin position="130"/>
        <end position="136"/>
    </location>
</feature>
<feature type="helix" evidence="4">
    <location>
        <begin position="138"/>
        <end position="151"/>
    </location>
</feature>
<feature type="turn" evidence="4">
    <location>
        <begin position="154"/>
        <end position="156"/>
    </location>
</feature>
<feature type="strand" evidence="4">
    <location>
        <begin position="157"/>
        <end position="161"/>
    </location>
</feature>
<feature type="strand" evidence="4">
    <location>
        <begin position="174"/>
        <end position="181"/>
    </location>
</feature>
<feature type="helix" evidence="4">
    <location>
        <begin position="183"/>
        <end position="185"/>
    </location>
</feature>
<feature type="helix" evidence="4">
    <location>
        <begin position="188"/>
        <end position="198"/>
    </location>
</feature>
<feature type="strand" evidence="4">
    <location>
        <begin position="199"/>
        <end position="212"/>
    </location>
</feature>
<feature type="helix" evidence="4">
    <location>
        <begin position="214"/>
        <end position="216"/>
    </location>
</feature>
<feature type="helix" evidence="4">
    <location>
        <begin position="221"/>
        <end position="230"/>
    </location>
</feature>
<feature type="helix" evidence="4">
    <location>
        <begin position="237"/>
        <end position="246"/>
    </location>
</feature>
<feature type="strand" evidence="4">
    <location>
        <begin position="249"/>
        <end position="256"/>
    </location>
</feature>
<feature type="helix" evidence="4">
    <location>
        <begin position="258"/>
        <end position="268"/>
    </location>
</feature>
<feature type="strand" evidence="4">
    <location>
        <begin position="271"/>
        <end position="273"/>
    </location>
</feature>
<feature type="helix" evidence="4">
    <location>
        <begin position="278"/>
        <end position="287"/>
    </location>
</feature>
<feature type="strand" evidence="4">
    <location>
        <begin position="288"/>
        <end position="299"/>
    </location>
</feature>